<reference key="1">
    <citation type="submission" date="2007-09" db="EMBL/GenBank/DDBJ databases">
        <title>Complete sequence of chromosome of Serratia proteamaculans 568.</title>
        <authorList>
            <consortium name="US DOE Joint Genome Institute"/>
            <person name="Copeland A."/>
            <person name="Lucas S."/>
            <person name="Lapidus A."/>
            <person name="Barry K."/>
            <person name="Glavina del Rio T."/>
            <person name="Dalin E."/>
            <person name="Tice H."/>
            <person name="Pitluck S."/>
            <person name="Chain P."/>
            <person name="Malfatti S."/>
            <person name="Shin M."/>
            <person name="Vergez L."/>
            <person name="Schmutz J."/>
            <person name="Larimer F."/>
            <person name="Land M."/>
            <person name="Hauser L."/>
            <person name="Kyrpides N."/>
            <person name="Kim E."/>
            <person name="Taghavi S."/>
            <person name="Newman L."/>
            <person name="Vangronsveld J."/>
            <person name="van der Lelie D."/>
            <person name="Richardson P."/>
        </authorList>
    </citation>
    <scope>NUCLEOTIDE SEQUENCE [LARGE SCALE GENOMIC DNA]</scope>
    <source>
        <strain>568</strain>
    </source>
</reference>
<gene>
    <name evidence="1" type="primary">tsf</name>
    <name type="ordered locus">Spro_3789</name>
</gene>
<protein>
    <recommendedName>
        <fullName evidence="1">Elongation factor Ts</fullName>
        <shortName evidence="1">EF-Ts</shortName>
    </recommendedName>
</protein>
<keyword id="KW-0963">Cytoplasm</keyword>
<keyword id="KW-0251">Elongation factor</keyword>
<keyword id="KW-0648">Protein biosynthesis</keyword>
<organism>
    <name type="scientific">Serratia proteamaculans (strain 568)</name>
    <dbReference type="NCBI Taxonomy" id="399741"/>
    <lineage>
        <taxon>Bacteria</taxon>
        <taxon>Pseudomonadati</taxon>
        <taxon>Pseudomonadota</taxon>
        <taxon>Gammaproteobacteria</taxon>
        <taxon>Enterobacterales</taxon>
        <taxon>Yersiniaceae</taxon>
        <taxon>Serratia</taxon>
    </lineage>
</organism>
<proteinExistence type="inferred from homology"/>
<comment type="function">
    <text evidence="1">Associates with the EF-Tu.GDP complex and induces the exchange of GDP to GTP. It remains bound to the aminoacyl-tRNA.EF-Tu.GTP complex up to the GTP hydrolysis stage on the ribosome.</text>
</comment>
<comment type="subcellular location">
    <subcellularLocation>
        <location evidence="1">Cytoplasm</location>
    </subcellularLocation>
</comment>
<comment type="similarity">
    <text evidence="1">Belongs to the EF-Ts family.</text>
</comment>
<dbReference type="EMBL" id="CP000826">
    <property type="protein sequence ID" value="ABV42885.1"/>
    <property type="molecule type" value="Genomic_DNA"/>
</dbReference>
<dbReference type="SMR" id="A8GIE5"/>
<dbReference type="STRING" id="399741.Spro_3789"/>
<dbReference type="KEGG" id="spe:Spro_3789"/>
<dbReference type="eggNOG" id="COG0264">
    <property type="taxonomic scope" value="Bacteria"/>
</dbReference>
<dbReference type="HOGENOM" id="CLU_047155_0_2_6"/>
<dbReference type="OrthoDB" id="9808348at2"/>
<dbReference type="GO" id="GO:0005737">
    <property type="term" value="C:cytoplasm"/>
    <property type="evidence" value="ECO:0007669"/>
    <property type="project" value="UniProtKB-SubCell"/>
</dbReference>
<dbReference type="GO" id="GO:0003746">
    <property type="term" value="F:translation elongation factor activity"/>
    <property type="evidence" value="ECO:0007669"/>
    <property type="project" value="UniProtKB-UniRule"/>
</dbReference>
<dbReference type="CDD" id="cd14275">
    <property type="entry name" value="UBA_EF-Ts"/>
    <property type="match status" value="1"/>
</dbReference>
<dbReference type="FunFam" id="1.10.286.20:FF:000001">
    <property type="entry name" value="Elongation factor Ts"/>
    <property type="match status" value="1"/>
</dbReference>
<dbReference type="FunFam" id="1.10.8.10:FF:000001">
    <property type="entry name" value="Elongation factor Ts"/>
    <property type="match status" value="1"/>
</dbReference>
<dbReference type="FunFam" id="3.30.479.20:FF:000001">
    <property type="entry name" value="Elongation factor Ts"/>
    <property type="match status" value="1"/>
</dbReference>
<dbReference type="Gene3D" id="1.10.286.20">
    <property type="match status" value="1"/>
</dbReference>
<dbReference type="Gene3D" id="1.10.8.10">
    <property type="entry name" value="DNA helicase RuvA subunit, C-terminal domain"/>
    <property type="match status" value="1"/>
</dbReference>
<dbReference type="Gene3D" id="3.30.479.20">
    <property type="entry name" value="Elongation factor Ts, dimerisation domain"/>
    <property type="match status" value="2"/>
</dbReference>
<dbReference type="HAMAP" id="MF_00050">
    <property type="entry name" value="EF_Ts"/>
    <property type="match status" value="1"/>
</dbReference>
<dbReference type="InterPro" id="IPR036402">
    <property type="entry name" value="EF-Ts_dimer_sf"/>
</dbReference>
<dbReference type="InterPro" id="IPR001816">
    <property type="entry name" value="Transl_elong_EFTs/EF1B"/>
</dbReference>
<dbReference type="InterPro" id="IPR014039">
    <property type="entry name" value="Transl_elong_EFTs/EF1B_dimer"/>
</dbReference>
<dbReference type="InterPro" id="IPR018101">
    <property type="entry name" value="Transl_elong_Ts_CS"/>
</dbReference>
<dbReference type="InterPro" id="IPR009060">
    <property type="entry name" value="UBA-like_sf"/>
</dbReference>
<dbReference type="NCBIfam" id="TIGR00116">
    <property type="entry name" value="tsf"/>
    <property type="match status" value="1"/>
</dbReference>
<dbReference type="PANTHER" id="PTHR11741">
    <property type="entry name" value="ELONGATION FACTOR TS"/>
    <property type="match status" value="1"/>
</dbReference>
<dbReference type="PANTHER" id="PTHR11741:SF0">
    <property type="entry name" value="ELONGATION FACTOR TS, MITOCHONDRIAL"/>
    <property type="match status" value="1"/>
</dbReference>
<dbReference type="Pfam" id="PF00889">
    <property type="entry name" value="EF_TS"/>
    <property type="match status" value="1"/>
</dbReference>
<dbReference type="SUPFAM" id="SSF54713">
    <property type="entry name" value="Elongation factor Ts (EF-Ts), dimerisation domain"/>
    <property type="match status" value="2"/>
</dbReference>
<dbReference type="SUPFAM" id="SSF46934">
    <property type="entry name" value="UBA-like"/>
    <property type="match status" value="1"/>
</dbReference>
<dbReference type="PROSITE" id="PS01126">
    <property type="entry name" value="EF_TS_1"/>
    <property type="match status" value="1"/>
</dbReference>
<dbReference type="PROSITE" id="PS01127">
    <property type="entry name" value="EF_TS_2"/>
    <property type="match status" value="1"/>
</dbReference>
<accession>A8GIE5</accession>
<sequence>MADITAALVKELRERTGAGMMDCKKALVESNGDIELAIENMRKSGAIKAAKKAGNVAADGVIKTKIEGNYGLILEVNCQTDFVAKDAGFQAFADKVLDAAFAGKITDVEVLKAQFEEERVALVAKIGENINIRRVASLEGEVLGSYLHGARIGVLIAATGADEELVKQIAMHVAASKPEFVKPEDVSAEVVEKEYQVQLDIAMQSGKPKEIAEKMVEGRMKKFTGEVSLTGQPFVIEPSKTVGQVLKEHNADVVNFIRFEVGEGIAKVENDFAAEVAAMSKQS</sequence>
<evidence type="ECO:0000255" key="1">
    <source>
        <dbReference type="HAMAP-Rule" id="MF_00050"/>
    </source>
</evidence>
<name>EFTS_SERP5</name>
<feature type="chain" id="PRO_1000057359" description="Elongation factor Ts">
    <location>
        <begin position="1"/>
        <end position="283"/>
    </location>
</feature>
<feature type="region of interest" description="Involved in Mg(2+) ion dislocation from EF-Tu" evidence="1">
    <location>
        <begin position="80"/>
        <end position="83"/>
    </location>
</feature>